<accession>Q6XU11</accession>
<accession>Q1K9P9</accession>
<feature type="chain" id="PRO_0000326282" description="Matrix protein 1">
    <location>
        <begin position="1"/>
        <end position="252"/>
    </location>
</feature>
<feature type="region of interest" description="Membrane-binding" evidence="1">
    <location>
        <begin position="1"/>
        <end position="164"/>
    </location>
</feature>
<feature type="region of interest" description="RNP-binding" evidence="1">
    <location>
        <begin position="165"/>
        <end position="252"/>
    </location>
</feature>
<feature type="short sequence motif" description="Nuclear localization signal" evidence="1">
    <location>
        <begin position="101"/>
        <end position="105"/>
    </location>
</feature>
<feature type="sequence conflict" description="In Ref. 2; ABF21300." ref="2">
    <original>G</original>
    <variation>S</variation>
    <location>
        <position position="118"/>
    </location>
</feature>
<feature type="sequence conflict" description="In Ref. 2; ABF21300." ref="2">
    <original>M</original>
    <variation>I</variation>
    <location>
        <position position="203"/>
    </location>
</feature>
<keyword id="KW-0025">Alternative splicing</keyword>
<keyword id="KW-1048">Host nucleus</keyword>
<keyword id="KW-0472">Membrane</keyword>
<keyword id="KW-0694">RNA-binding</keyword>
<keyword id="KW-0468">Viral matrix protein</keyword>
<keyword id="KW-0946">Virion</keyword>
<organism>
    <name type="scientific">Influenza A virus (strain A/Japan/305/1957 H2N2)</name>
    <dbReference type="NCBI Taxonomy" id="387161"/>
    <lineage>
        <taxon>Viruses</taxon>
        <taxon>Riboviria</taxon>
        <taxon>Orthornavirae</taxon>
        <taxon>Negarnaviricota</taxon>
        <taxon>Polyploviricotina</taxon>
        <taxon>Insthoviricetes</taxon>
        <taxon>Articulavirales</taxon>
        <taxon>Orthomyxoviridae</taxon>
        <taxon>Alphainfluenzavirus</taxon>
        <taxon>Alphainfluenzavirus influenzae</taxon>
        <taxon>Influenza A virus</taxon>
    </lineage>
</organism>
<reference key="1">
    <citation type="journal article" date="2004" name="Virology">
        <title>Genetic analysis of human H2N2 and early H3N2 influenza viruses, 1957-1972: evidence for genetic divergence and multiple reassortment events.</title>
        <authorList>
            <person name="Lindstrom S.E."/>
            <person name="Cox N.J."/>
            <person name="Klimov A."/>
        </authorList>
    </citation>
    <scope>NUCLEOTIDE SEQUENCE [GENOMIC RNA]</scope>
</reference>
<reference key="2">
    <citation type="submission" date="2006-04" db="EMBL/GenBank/DDBJ databases">
        <title>Complete genome sequencing and analysis of selected Influenza Virus vaccine strains spanning six decades (1933-1999).</title>
        <authorList>
            <person name="Mbawuike I.N."/>
            <person name="Zhang Y."/>
            <person name="Yamada R.E."/>
            <person name="Nino D."/>
            <person name="Bui H.-H."/>
            <person name="Sette A."/>
            <person name="Couch R.B."/>
        </authorList>
    </citation>
    <scope>NUCLEOTIDE SEQUENCE [GENOMIC RNA]</scope>
</reference>
<protein>
    <recommendedName>
        <fullName evidence="1">Matrix protein 1</fullName>
        <shortName evidence="1">M1</shortName>
    </recommendedName>
</protein>
<comment type="function">
    <text evidence="1">Plays critical roles in virus replication, from virus entry and uncoating to assembly and budding of the virus particle. M1 binding to ribonucleocapsids (RNPs) in nucleus seems to inhibit viral transcription. Interaction of viral NEP with M1-RNP is thought to promote nuclear export of the complex, which is targeted to the virion assembly site at the apical plasma membrane in polarized epithelial cells. Interactions with NA and HA may bring M1, a non-raft-associated protein, into lipid rafts. Forms a continuous shell on the inner side of the lipid bilayer in virion, where it binds the RNP. During virus entry into cell, the M2 ion channel acidifies the internal virion core, inducing M1 dissociation from the RNP. M1-free RNPs are transported to the nucleus, where viral transcription and replication can take place.</text>
</comment>
<comment type="function">
    <text evidence="1">Determines the virion's shape: spherical or filamentous. Clinical isolates of influenza are characterized by the presence of significant proportion of filamentous virions, whereas after multiple passage on eggs or cell culture, virions have only spherical morphology. Filamentous virions are thought to be important to infect neighboring cells, and spherical virions more suited to spread through aerosol between hosts organisms.</text>
</comment>
<comment type="subunit">
    <text evidence="1">Homodimer and homomultimer. Interacts with NEP. Binds ribonucleocapsid by both interacting with genomic RNA and NP protein. May interact with HA and NA. Cannot bind NP without genomic RNA.</text>
</comment>
<comment type="subcellular location">
    <subcellularLocation>
        <location evidence="1">Virion membrane</location>
        <topology evidence="1">Peripheral membrane protein</topology>
        <orientation evidence="1">Cytoplasmic side</orientation>
    </subcellularLocation>
    <subcellularLocation>
        <location evidence="1">Host nucleus</location>
    </subcellularLocation>
</comment>
<comment type="alternative products">
    <event type="alternative splicing"/>
    <isoform>
        <id>Q6XU11-1</id>
        <name>M1</name>
        <sequence type="displayed"/>
    </isoform>
    <isoform>
        <id>Q6XU12-1</id>
        <name>M2</name>
        <sequence type="external"/>
    </isoform>
    <text>Only the first 9 residues are shared by the 2 isoforms.</text>
</comment>
<comment type="miscellaneous">
    <text evidence="1">Most abundant protein in virion. When expressed alone can form virus-like particles in transfected cells.</text>
</comment>
<comment type="similarity">
    <text evidence="1">Belongs to the influenza viruses Matrix protein M1 family.</text>
</comment>
<gene>
    <name evidence="1" type="primary">M</name>
</gene>
<name>M1_I57A0</name>
<dbReference type="EMBL" id="AY210028">
    <property type="protein sequence ID" value="AAO46347.1"/>
    <property type="molecule type" value="Genomic_RNA"/>
</dbReference>
<dbReference type="EMBL" id="DQ508844">
    <property type="protein sequence ID" value="ABF21300.1"/>
    <property type="molecule type" value="Genomic_RNA"/>
</dbReference>
<dbReference type="SMR" id="Q6XU11"/>
<dbReference type="Proteomes" id="UP000118104">
    <property type="component" value="Genome"/>
</dbReference>
<dbReference type="GO" id="GO:0042025">
    <property type="term" value="C:host cell nucleus"/>
    <property type="evidence" value="ECO:0007669"/>
    <property type="project" value="UniProtKB-SubCell"/>
</dbReference>
<dbReference type="GO" id="GO:0016020">
    <property type="term" value="C:membrane"/>
    <property type="evidence" value="ECO:0007669"/>
    <property type="project" value="UniProtKB-KW"/>
</dbReference>
<dbReference type="GO" id="GO:0055036">
    <property type="term" value="C:virion membrane"/>
    <property type="evidence" value="ECO:0007669"/>
    <property type="project" value="UniProtKB-SubCell"/>
</dbReference>
<dbReference type="GO" id="GO:0003723">
    <property type="term" value="F:RNA binding"/>
    <property type="evidence" value="ECO:0007669"/>
    <property type="project" value="UniProtKB-UniRule"/>
</dbReference>
<dbReference type="GO" id="GO:0039660">
    <property type="term" value="F:structural constituent of virion"/>
    <property type="evidence" value="ECO:0007669"/>
    <property type="project" value="UniProtKB-UniRule"/>
</dbReference>
<dbReference type="GO" id="GO:0046761">
    <property type="term" value="P:viral budding from plasma membrane"/>
    <property type="evidence" value="ECO:0007669"/>
    <property type="project" value="UniProtKB-UniRule"/>
</dbReference>
<dbReference type="FunFam" id="1.10.10.180:FF:000001">
    <property type="entry name" value="Matrix protein 1"/>
    <property type="match status" value="1"/>
</dbReference>
<dbReference type="FunFam" id="1.20.91.10:FF:000001">
    <property type="entry name" value="Matrix protein 1"/>
    <property type="match status" value="1"/>
</dbReference>
<dbReference type="Gene3D" id="1.10.10.180">
    <property type="match status" value="1"/>
</dbReference>
<dbReference type="Gene3D" id="1.20.91.10">
    <property type="match status" value="1"/>
</dbReference>
<dbReference type="HAMAP" id="MF_04068">
    <property type="entry name" value="INFV_M1"/>
    <property type="match status" value="1"/>
</dbReference>
<dbReference type="InterPro" id="IPR036039">
    <property type="entry name" value="Flu_matrix_M1"/>
</dbReference>
<dbReference type="InterPro" id="IPR013188">
    <property type="entry name" value="Flu_matrix_M1_C"/>
</dbReference>
<dbReference type="InterPro" id="IPR001561">
    <property type="entry name" value="Flu_matrix_M1_N"/>
</dbReference>
<dbReference type="InterPro" id="IPR015423">
    <property type="entry name" value="Flu_matrix_M1_N_sub1"/>
</dbReference>
<dbReference type="InterPro" id="IPR015799">
    <property type="entry name" value="Flu_matrix_M1_N_sub2"/>
</dbReference>
<dbReference type="InterPro" id="IPR037533">
    <property type="entry name" value="INFV_M1"/>
</dbReference>
<dbReference type="Pfam" id="PF00598">
    <property type="entry name" value="Flu_M1"/>
    <property type="match status" value="1"/>
</dbReference>
<dbReference type="Pfam" id="PF08289">
    <property type="entry name" value="Flu_M1_C"/>
    <property type="match status" value="1"/>
</dbReference>
<dbReference type="SMART" id="SM00759">
    <property type="entry name" value="Flu_M1_C"/>
    <property type="match status" value="1"/>
</dbReference>
<dbReference type="SUPFAM" id="SSF48145">
    <property type="entry name" value="Influenza virus matrix protein M1"/>
    <property type="match status" value="1"/>
</dbReference>
<proteinExistence type="inferred from homology"/>
<sequence length="252" mass="27804">MSLLTEVETYVLSIVPSGPLKAEIAQRLEDVFAGKNTDLEALMEWLKTRPILSPLTKGILGFVFTLTVPSERGLQRRRFVQNALNGNGDPNNMDRAVKLYRKLKREITFHGAKEIALGYSAGALASCMGLIYNRMGAVTTEVAFGLVCATCEQIADSQHRSHRQMVTTTNPLIRHENRMVLASTTAKAMEQMAGSSEQAAEAMEVASQARQMVQAMRAIGTHPSSSAGLKDDLLENLQAYQKRMGVQMQRFK</sequence>
<evidence type="ECO:0000255" key="1">
    <source>
        <dbReference type="HAMAP-Rule" id="MF_04068"/>
    </source>
</evidence>
<organismHost>
    <name type="scientific">Aves</name>
    <dbReference type="NCBI Taxonomy" id="8782"/>
</organismHost>
<organismHost>
    <name type="scientific">Homo sapiens</name>
    <name type="common">Human</name>
    <dbReference type="NCBI Taxonomy" id="9606"/>
</organismHost>